<keyword id="KW-0012">Acyltransferase</keyword>
<keyword id="KW-0450">Lipoyl</keyword>
<keyword id="KW-0808">Transferase</keyword>
<keyword id="KW-0816">Tricarboxylic acid cycle</keyword>
<dbReference type="EC" id="2.3.1.61" evidence="2"/>
<dbReference type="EMBL" id="AE006914">
    <property type="protein sequence ID" value="AAL02764.1"/>
    <property type="molecule type" value="Genomic_DNA"/>
</dbReference>
<dbReference type="PIR" id="B97728">
    <property type="entry name" value="B97728"/>
</dbReference>
<dbReference type="SMR" id="Q92J43"/>
<dbReference type="GeneID" id="927964"/>
<dbReference type="KEGG" id="rco:RC0226"/>
<dbReference type="PATRIC" id="fig|272944.4.peg.261"/>
<dbReference type="HOGENOM" id="CLU_016733_0_0_5"/>
<dbReference type="UniPathway" id="UPA00868">
    <property type="reaction ID" value="UER00840"/>
</dbReference>
<dbReference type="Proteomes" id="UP000000816">
    <property type="component" value="Chromosome"/>
</dbReference>
<dbReference type="GO" id="GO:0005829">
    <property type="term" value="C:cytosol"/>
    <property type="evidence" value="ECO:0007669"/>
    <property type="project" value="TreeGrafter"/>
</dbReference>
<dbReference type="GO" id="GO:0045252">
    <property type="term" value="C:oxoglutarate dehydrogenase complex"/>
    <property type="evidence" value="ECO:0007669"/>
    <property type="project" value="InterPro"/>
</dbReference>
<dbReference type="GO" id="GO:0004149">
    <property type="term" value="F:dihydrolipoyllysine-residue succinyltransferase activity"/>
    <property type="evidence" value="ECO:0007669"/>
    <property type="project" value="UniProtKB-EC"/>
</dbReference>
<dbReference type="GO" id="GO:0033512">
    <property type="term" value="P:L-lysine catabolic process to acetyl-CoA via saccharopine"/>
    <property type="evidence" value="ECO:0007669"/>
    <property type="project" value="UniProtKB-UniPathway"/>
</dbReference>
<dbReference type="GO" id="GO:0006099">
    <property type="term" value="P:tricarboxylic acid cycle"/>
    <property type="evidence" value="ECO:0007669"/>
    <property type="project" value="UniProtKB-KW"/>
</dbReference>
<dbReference type="CDD" id="cd06849">
    <property type="entry name" value="lipoyl_domain"/>
    <property type="match status" value="1"/>
</dbReference>
<dbReference type="FunFam" id="3.30.559.10:FF:000007">
    <property type="entry name" value="Dihydrolipoamide acetyltransferase component of pyruvate dehydrogenase complex"/>
    <property type="match status" value="1"/>
</dbReference>
<dbReference type="Gene3D" id="2.40.50.100">
    <property type="match status" value="1"/>
</dbReference>
<dbReference type="Gene3D" id="3.30.559.10">
    <property type="entry name" value="Chloramphenicol acetyltransferase-like domain"/>
    <property type="match status" value="1"/>
</dbReference>
<dbReference type="Gene3D" id="4.10.320.10">
    <property type="entry name" value="E3-binding domain"/>
    <property type="match status" value="1"/>
</dbReference>
<dbReference type="InterPro" id="IPR003016">
    <property type="entry name" value="2-oxoA_DH_lipoyl-BS"/>
</dbReference>
<dbReference type="InterPro" id="IPR050537">
    <property type="entry name" value="2-oxoacid_dehydrogenase"/>
</dbReference>
<dbReference type="InterPro" id="IPR001078">
    <property type="entry name" value="2-oxoacid_DH_actylTfrase"/>
</dbReference>
<dbReference type="InterPro" id="IPR000089">
    <property type="entry name" value="Biotin_lipoyl"/>
</dbReference>
<dbReference type="InterPro" id="IPR023213">
    <property type="entry name" value="CAT-like_dom_sf"/>
</dbReference>
<dbReference type="InterPro" id="IPR036625">
    <property type="entry name" value="E3-bd_dom_sf"/>
</dbReference>
<dbReference type="InterPro" id="IPR004167">
    <property type="entry name" value="PSBD"/>
</dbReference>
<dbReference type="InterPro" id="IPR011053">
    <property type="entry name" value="Single_hybrid_motif"/>
</dbReference>
<dbReference type="InterPro" id="IPR006255">
    <property type="entry name" value="SucB"/>
</dbReference>
<dbReference type="NCBIfam" id="NF004309">
    <property type="entry name" value="PRK05704.1"/>
    <property type="match status" value="1"/>
</dbReference>
<dbReference type="NCBIfam" id="TIGR01347">
    <property type="entry name" value="sucB"/>
    <property type="match status" value="1"/>
</dbReference>
<dbReference type="PANTHER" id="PTHR43416:SF5">
    <property type="entry name" value="DIHYDROLIPOYLLYSINE-RESIDUE SUCCINYLTRANSFERASE COMPONENT OF 2-OXOGLUTARATE DEHYDROGENASE COMPLEX, MITOCHONDRIAL"/>
    <property type="match status" value="1"/>
</dbReference>
<dbReference type="PANTHER" id="PTHR43416">
    <property type="entry name" value="DIHYDROLIPOYLLYSINE-RESIDUE SUCCINYLTRANSFERASE COMPONENT OF 2-OXOGLUTARATE DEHYDROGENASE COMPLEX, MITOCHONDRIAL-RELATED"/>
    <property type="match status" value="1"/>
</dbReference>
<dbReference type="Pfam" id="PF00198">
    <property type="entry name" value="2-oxoacid_dh"/>
    <property type="match status" value="1"/>
</dbReference>
<dbReference type="Pfam" id="PF00364">
    <property type="entry name" value="Biotin_lipoyl"/>
    <property type="match status" value="1"/>
</dbReference>
<dbReference type="Pfam" id="PF02817">
    <property type="entry name" value="E3_binding"/>
    <property type="match status" value="1"/>
</dbReference>
<dbReference type="SUPFAM" id="SSF52777">
    <property type="entry name" value="CoA-dependent acyltransferases"/>
    <property type="match status" value="1"/>
</dbReference>
<dbReference type="SUPFAM" id="SSF47005">
    <property type="entry name" value="Peripheral subunit-binding domain of 2-oxo acid dehydrogenase complex"/>
    <property type="match status" value="1"/>
</dbReference>
<dbReference type="SUPFAM" id="SSF51230">
    <property type="entry name" value="Single hybrid motif"/>
    <property type="match status" value="1"/>
</dbReference>
<dbReference type="PROSITE" id="PS50968">
    <property type="entry name" value="BIOTINYL_LIPOYL"/>
    <property type="match status" value="1"/>
</dbReference>
<dbReference type="PROSITE" id="PS00189">
    <property type="entry name" value="LIPOYL"/>
    <property type="match status" value="1"/>
</dbReference>
<dbReference type="PROSITE" id="PS51826">
    <property type="entry name" value="PSBD"/>
    <property type="match status" value="1"/>
</dbReference>
<name>ODO2_RICCN</name>
<protein>
    <recommendedName>
        <fullName>Dihydrolipoyllysine-residue succinyltransferase component of 2-oxoglutarate dehydrogenase complex</fullName>
        <ecNumber evidence="2">2.3.1.61</ecNumber>
    </recommendedName>
    <alternativeName>
        <fullName>2-oxoglutarate dehydrogenase complex component E2</fullName>
        <shortName>OGDC-E2</shortName>
    </alternativeName>
    <alternativeName>
        <fullName>Dihydrolipoamide succinyltransferase component of 2-oxoglutarate dehydrogenase complex</fullName>
    </alternativeName>
</protein>
<accession>Q92J43</accession>
<feature type="chain" id="PRO_0000162268" description="Dihydrolipoyllysine-residue succinyltransferase component of 2-oxoglutarate dehydrogenase complex">
    <location>
        <begin position="1"/>
        <end position="395"/>
    </location>
</feature>
<feature type="domain" description="Lipoyl-binding" evidence="3">
    <location>
        <begin position="2"/>
        <end position="77"/>
    </location>
</feature>
<feature type="domain" description="Peripheral subunit-binding (PSBD)" evidence="4">
    <location>
        <begin position="111"/>
        <end position="148"/>
    </location>
</feature>
<feature type="active site" evidence="2">
    <location>
        <position position="366"/>
    </location>
</feature>
<feature type="active site" evidence="2">
    <location>
        <position position="370"/>
    </location>
</feature>
<feature type="modified residue" description="N6-lipoyllysine" evidence="3">
    <location>
        <position position="43"/>
    </location>
</feature>
<organism>
    <name type="scientific">Rickettsia conorii (strain ATCC VR-613 / Malish 7)</name>
    <dbReference type="NCBI Taxonomy" id="272944"/>
    <lineage>
        <taxon>Bacteria</taxon>
        <taxon>Pseudomonadati</taxon>
        <taxon>Pseudomonadota</taxon>
        <taxon>Alphaproteobacteria</taxon>
        <taxon>Rickettsiales</taxon>
        <taxon>Rickettsiaceae</taxon>
        <taxon>Rickettsieae</taxon>
        <taxon>Rickettsia</taxon>
        <taxon>spotted fever group</taxon>
    </lineage>
</organism>
<comment type="function">
    <text evidence="2">E2 component of the 2-oxoglutarate dehydrogenase (OGDH) complex which catalyzes the second step in the conversion of 2-oxoglutarate to succinyl-CoA and CO(2).</text>
</comment>
<comment type="catalytic activity">
    <reaction evidence="2">
        <text>N(6)-[(R)-dihydrolipoyl]-L-lysyl-[protein] + succinyl-CoA = N(6)-[(R)-S(8)-succinyldihydrolipoyl]-L-lysyl-[protein] + CoA</text>
        <dbReference type="Rhea" id="RHEA:15213"/>
        <dbReference type="Rhea" id="RHEA-COMP:10475"/>
        <dbReference type="Rhea" id="RHEA-COMP:20092"/>
        <dbReference type="ChEBI" id="CHEBI:57287"/>
        <dbReference type="ChEBI" id="CHEBI:57292"/>
        <dbReference type="ChEBI" id="CHEBI:83100"/>
        <dbReference type="ChEBI" id="CHEBI:83120"/>
        <dbReference type="EC" id="2.3.1.61"/>
    </reaction>
</comment>
<comment type="cofactor">
    <cofactor evidence="1">
        <name>(R)-lipoate</name>
        <dbReference type="ChEBI" id="CHEBI:83088"/>
    </cofactor>
    <text evidence="1">Binds 1 lipoyl cofactor covalently.</text>
</comment>
<comment type="pathway">
    <text>Amino-acid degradation; L-lysine degradation via saccharopine pathway; glutaryl-CoA from L-lysine: step 6/6.</text>
</comment>
<comment type="subunit">
    <text evidence="2">Forms a 24-polypeptide structural core with octahedral symmetry. Part of the 2-oxoglutarate dehydrogenase (OGDH) complex composed of E1 (2-oxoglutarate dehydrogenase), E2 (dihydrolipoamide succinyltransferase) and E3 (dihydrolipoamide dehydrogenase); the complex contains multiple copies of the three enzymatic components (E1, E2 and E3).</text>
</comment>
<comment type="similarity">
    <text evidence="5">Belongs to the 2-oxoacid dehydrogenase family.</text>
</comment>
<proteinExistence type="inferred from homology"/>
<gene>
    <name type="primary">sucB</name>
    <name type="ordered locus">RC0226</name>
</gene>
<sequence length="395" mass="42798">MRVKIIVPSLGESITEATIAKWYKKQGDSVKTDELLLEIETEKVTLEVNAPCNGTIGKISKTEGANVAVGEEIGEINEGASANTAGTNNESAKAQAVTQPTSEKPAVANNTLAPSVQKLVTENKLDPNNIKGTGRDGRITKGDVLATINTTTTSAPAISKSNEERVQRVRMSRLRKTIAQRLKDSQNTAAILTTFNEIDMSKVIALRNQYKEEFEKKHAVKLGFMSFFVKATIEALKLIPSVNAEIDGDDLVYKNYYDIGVAVGTEQGLVVPVVRDADKMGFAEVEKTIGILAKQAREGKLSMADLSGGTFSISNGGVYGSLLSTPIINPPQSGILGLHKTEERAVVIDGKIEIRPMMYIALSYDHRIIDGKEGVSFLVKIKQLIENPEKLLLNL</sequence>
<evidence type="ECO:0000250" key="1"/>
<evidence type="ECO:0000250" key="2">
    <source>
        <dbReference type="UniProtKB" id="P0AFG6"/>
    </source>
</evidence>
<evidence type="ECO:0000255" key="3">
    <source>
        <dbReference type="PROSITE-ProRule" id="PRU01066"/>
    </source>
</evidence>
<evidence type="ECO:0000255" key="4">
    <source>
        <dbReference type="PROSITE-ProRule" id="PRU01170"/>
    </source>
</evidence>
<evidence type="ECO:0000305" key="5"/>
<reference key="1">
    <citation type="journal article" date="2001" name="Science">
        <title>Mechanisms of evolution in Rickettsia conorii and R. prowazekii.</title>
        <authorList>
            <person name="Ogata H."/>
            <person name="Audic S."/>
            <person name="Renesto-Audiffren P."/>
            <person name="Fournier P.-E."/>
            <person name="Barbe V."/>
            <person name="Samson D."/>
            <person name="Roux V."/>
            <person name="Cossart P."/>
            <person name="Weissenbach J."/>
            <person name="Claverie J.-M."/>
            <person name="Raoult D."/>
        </authorList>
    </citation>
    <scope>NUCLEOTIDE SEQUENCE [LARGE SCALE GENOMIC DNA]</scope>
    <source>
        <strain>ATCC VR-613 / Malish 7</strain>
    </source>
</reference>